<keyword id="KW-0002">3D-structure</keyword>
<keyword id="KW-0903">Direct protein sequencing</keyword>
<keyword id="KW-1015">Disulfide bond</keyword>
<keyword id="KW-0325">Glycoprotein</keyword>
<keyword id="KW-0348">Hemagglutinin</keyword>
<keyword id="KW-1032">Host cell membrane</keyword>
<keyword id="KW-1043">Host membrane</keyword>
<keyword id="KW-0378">Hydrolase</keyword>
<keyword id="KW-0472">Membrane</keyword>
<keyword id="KW-0732">Signal</keyword>
<keyword id="KW-0812">Transmembrane</keyword>
<keyword id="KW-1133">Transmembrane helix</keyword>
<keyword id="KW-0261">Viral envelope protein</keyword>
<keyword id="KW-0946">Virion</keyword>
<gene>
    <name evidence="1" type="primary">HE</name>
    <name type="ORF">2b</name>
</gene>
<feature type="signal peptide" evidence="4">
    <location>
        <begin position="1"/>
        <end position="18"/>
    </location>
</feature>
<feature type="signal peptide" evidence="1">
    <location>
        <begin position="1"/>
        <end position="16"/>
    </location>
</feature>
<feature type="chain" id="PRO_0000037138" description="Hemagglutinin-esterase" evidence="1">
    <location>
        <begin position="17"/>
        <end position="424"/>
    </location>
</feature>
<feature type="topological domain" description="Virion surface" evidence="1">
    <location>
        <begin position="17"/>
        <end position="392"/>
    </location>
</feature>
<feature type="transmembrane region" description="Helical" evidence="1">
    <location>
        <begin position="393"/>
        <end position="413"/>
    </location>
</feature>
<feature type="topological domain" description="Intravirion" evidence="1">
    <location>
        <begin position="414"/>
        <end position="424"/>
    </location>
</feature>
<feature type="region of interest" description="Esterase domain 1" evidence="1">
    <location>
        <begin position="7"/>
        <end position="127"/>
    </location>
</feature>
<feature type="region of interest" description="Receptor binding" evidence="1">
    <location>
        <begin position="128"/>
        <end position="266"/>
    </location>
</feature>
<feature type="region of interest" description="Esterase domain 2" evidence="1">
    <location>
        <begin position="267"/>
        <end position="379"/>
    </location>
</feature>
<feature type="active site" description="Nucleophile" evidence="1 2">
    <location>
        <position position="40"/>
    </location>
</feature>
<feature type="active site" description="Charge relay system" evidence="1">
    <location>
        <position position="326"/>
    </location>
</feature>
<feature type="active site" description="Charge relay system" evidence="1">
    <location>
        <position position="329"/>
    </location>
</feature>
<feature type="glycosylation site" description="N-linked (GlcNAc...) asparagine; by host" evidence="1 2">
    <location>
        <position position="54"/>
    </location>
</feature>
<feature type="glycosylation site" description="N-linked (GlcNAc...) asparagine; by host" evidence="1 2">
    <location>
        <position position="89"/>
    </location>
</feature>
<feature type="glycosylation site" description="N-linked (GlcNAc...) asparagine; by host" evidence="1">
    <location>
        <position position="153"/>
    </location>
</feature>
<feature type="glycosylation site" description="N-linked (GlcNAc...) asparagine; by host" evidence="1 2">
    <location>
        <position position="236"/>
    </location>
</feature>
<feature type="glycosylation site" description="N-linked (GlcNAc...) asparagine; by host" evidence="1 2">
    <location>
        <position position="301"/>
    </location>
</feature>
<feature type="glycosylation site" description="N-linked (GlcNAc...) asparagine; by host" evidence="1 2">
    <location>
        <position position="316"/>
    </location>
</feature>
<feature type="glycosylation site" description="N-linked (GlcNAc...) asparagine; by host" evidence="1 2">
    <location>
        <position position="358"/>
    </location>
</feature>
<feature type="glycosylation site" description="N-linked (GlcNAc...) asparagine; by host" evidence="1">
    <location>
        <position position="417"/>
    </location>
</feature>
<feature type="disulfide bond" evidence="1 2">
    <location>
        <begin position="44"/>
        <end position="65"/>
    </location>
</feature>
<feature type="disulfide bond" evidence="1 2">
    <location>
        <begin position="113"/>
        <end position="162"/>
    </location>
</feature>
<feature type="disulfide bond" evidence="1 2">
    <location>
        <begin position="197"/>
        <end position="276"/>
    </location>
</feature>
<feature type="disulfide bond" evidence="1 2">
    <location>
        <begin position="205"/>
        <end position="249"/>
    </location>
</feature>
<feature type="disulfide bond" evidence="1 2">
    <location>
        <begin position="307"/>
        <end position="312"/>
    </location>
</feature>
<feature type="disulfide bond" evidence="1 2">
    <location>
        <begin position="347"/>
        <end position="371"/>
    </location>
</feature>
<feature type="mutagenesis site" description="Loss of enzyme activity." evidence="2">
    <original>S</original>
    <variation>A</variation>
    <location>
        <position position="40"/>
    </location>
</feature>
<feature type="mutagenesis site" description="Decreased receptor binding." evidence="2">
    <original>Y</original>
    <variation>A</variation>
    <location>
        <position position="184"/>
    </location>
</feature>
<feature type="mutagenesis site" description="Loss of receptor binding." evidence="2">
    <original>F</original>
    <variation>A</variation>
    <location>
        <position position="211"/>
    </location>
</feature>
<feature type="mutagenesis site" description="Loss of receptor binding; when associated with A-267." evidence="2">
    <original>L</original>
    <variation>A</variation>
    <location>
        <position position="266"/>
    </location>
</feature>
<feature type="mutagenesis site" description="Loss of receptor binding; when associated with A-266." evidence="2">
    <original>L</original>
    <variation>A</variation>
    <location>
        <position position="267"/>
    </location>
</feature>
<feature type="strand" evidence="5">
    <location>
        <begin position="23"/>
        <end position="25"/>
    </location>
</feature>
<feature type="strand" evidence="6">
    <location>
        <begin position="29"/>
        <end position="32"/>
    </location>
</feature>
<feature type="strand" evidence="6">
    <location>
        <begin position="34"/>
        <end position="39"/>
    </location>
</feature>
<feature type="helix" evidence="6">
    <location>
        <begin position="40"/>
        <end position="42"/>
    </location>
</feature>
<feature type="helix" evidence="6">
    <location>
        <begin position="44"/>
        <end position="49"/>
    </location>
</feature>
<feature type="strand" evidence="6">
    <location>
        <begin position="50"/>
        <end position="52"/>
    </location>
</feature>
<feature type="helix" evidence="5">
    <location>
        <begin position="55"/>
        <end position="57"/>
    </location>
</feature>
<feature type="helix" evidence="6">
    <location>
        <begin position="62"/>
        <end position="64"/>
    </location>
</feature>
<feature type="strand" evidence="6">
    <location>
        <begin position="70"/>
        <end position="73"/>
    </location>
</feature>
<feature type="helix" evidence="6">
    <location>
        <begin position="78"/>
        <end position="83"/>
    </location>
</feature>
<feature type="strand" evidence="6">
    <location>
        <begin position="84"/>
        <end position="86"/>
    </location>
</feature>
<feature type="strand" evidence="6">
    <location>
        <begin position="95"/>
        <end position="100"/>
    </location>
</feature>
<feature type="helix" evidence="6">
    <location>
        <begin position="107"/>
        <end position="109"/>
    </location>
</feature>
<feature type="helix" evidence="6">
    <location>
        <begin position="119"/>
        <end position="137"/>
    </location>
</feature>
<feature type="strand" evidence="6">
    <location>
        <begin position="140"/>
        <end position="147"/>
    </location>
</feature>
<feature type="strand" evidence="5">
    <location>
        <begin position="150"/>
        <end position="152"/>
    </location>
</feature>
<feature type="strand" evidence="6">
    <location>
        <begin position="162"/>
        <end position="164"/>
    </location>
</feature>
<feature type="strand" evidence="6">
    <location>
        <begin position="167"/>
        <end position="169"/>
    </location>
</feature>
<feature type="strand" evidence="6">
    <location>
        <begin position="171"/>
        <end position="175"/>
    </location>
</feature>
<feature type="strand" evidence="6">
    <location>
        <begin position="182"/>
        <end position="184"/>
    </location>
</feature>
<feature type="strand" evidence="6">
    <location>
        <begin position="188"/>
        <end position="207"/>
    </location>
</feature>
<feature type="strand" evidence="6">
    <location>
        <begin position="211"/>
        <end position="213"/>
    </location>
</feature>
<feature type="strand" evidence="6">
    <location>
        <begin position="216"/>
        <end position="218"/>
    </location>
</feature>
<feature type="strand" evidence="6">
    <location>
        <begin position="221"/>
        <end position="226"/>
    </location>
</feature>
<feature type="turn" evidence="6">
    <location>
        <begin position="227"/>
        <end position="229"/>
    </location>
</feature>
<feature type="strand" evidence="6">
    <location>
        <begin position="232"/>
        <end position="236"/>
    </location>
</feature>
<feature type="strand" evidence="6">
    <location>
        <begin position="242"/>
        <end position="244"/>
    </location>
</feature>
<feature type="strand" evidence="6">
    <location>
        <begin position="247"/>
        <end position="270"/>
    </location>
</feature>
<feature type="strand" evidence="6">
    <location>
        <begin position="273"/>
        <end position="280"/>
    </location>
</feature>
<feature type="strand" evidence="6">
    <location>
        <begin position="286"/>
        <end position="289"/>
    </location>
</feature>
<feature type="helix" evidence="6">
    <location>
        <begin position="302"/>
        <end position="306"/>
    </location>
</feature>
<feature type="turn" evidence="6">
    <location>
        <begin position="309"/>
        <end position="311"/>
    </location>
</feature>
<feature type="strand" evidence="6">
    <location>
        <begin position="312"/>
        <end position="315"/>
    </location>
</feature>
<feature type="strand" evidence="6">
    <location>
        <begin position="323"/>
        <end position="326"/>
    </location>
</feature>
<feature type="strand" evidence="6">
    <location>
        <begin position="329"/>
        <end position="331"/>
    </location>
</feature>
<feature type="helix" evidence="6">
    <location>
        <begin position="332"/>
        <end position="338"/>
    </location>
</feature>
<feature type="helix" evidence="6">
    <location>
        <begin position="339"/>
        <end position="342"/>
    </location>
</feature>
<feature type="strand" evidence="6">
    <location>
        <begin position="346"/>
        <end position="349"/>
    </location>
</feature>
<feature type="strand" evidence="6">
    <location>
        <begin position="352"/>
        <end position="355"/>
    </location>
</feature>
<feature type="strand" evidence="6">
    <location>
        <begin position="357"/>
        <end position="359"/>
    </location>
</feature>
<feature type="strand" evidence="6">
    <location>
        <begin position="368"/>
        <end position="370"/>
    </location>
</feature>
<reference key="1">
    <citation type="journal article" date="1990" name="J. Virol.">
        <title>Structure and orientation of expressed bovine coronavirus hemagglutinin-esterase protein.</title>
        <authorList>
            <person name="Kienzle T.E."/>
            <person name="Abraham S."/>
            <person name="Hogue B.G."/>
            <person name="Brian D.A."/>
        </authorList>
    </citation>
    <scope>NUCLEOTIDE SEQUENCE [GENOMIC RNA]</scope>
    <scope>SUBCELLULAR LOCATION</scope>
</reference>
<reference key="2">
    <citation type="journal article" date="1990" name="Adv. Exp. Med. Biol.">
        <title>Structure and expression of the bovine coronavirus hemagglutinin protein.</title>
        <authorList>
            <person name="Kienzle T.E."/>
            <person name="Abraham S."/>
            <person name="Hogue B.G."/>
            <person name="Brian D.A."/>
        </authorList>
    </citation>
    <scope>NUCLEOTIDE SEQUENCE [GENOMIC RNA]</scope>
</reference>
<reference key="3">
    <citation type="journal article" date="1989" name="J. Gen. Virol.">
        <title>Synthesis and processing of the bovine enteric coronavirus haemagglutinin protein.</title>
        <authorList>
            <person name="Hogue B.G."/>
            <person name="Kienzle T.E."/>
            <person name="Brian D.A."/>
        </authorList>
    </citation>
    <scope>PROTEIN SEQUENCE OF 19-27</scope>
</reference>
<reference key="4">
    <citation type="journal article" date="2005" name="J. Biol. Chem.">
        <title>Nidovirus sialate-O-acetylesterases: evolution and substrate specificity of coronaviral and toroviral receptor-destroying enzymes.</title>
        <authorList>
            <person name="Smits S.L."/>
            <person name="Gerwig G.J."/>
            <person name="van Vliet A.L."/>
            <person name="Lissenberg A."/>
            <person name="Briza P."/>
            <person name="Kamerling J.P."/>
            <person name="Vlasak R."/>
            <person name="de Groot R.J."/>
        </authorList>
    </citation>
    <scope>CHARACTERIZATION</scope>
</reference>
<reference key="5">
    <citation type="journal article" date="2008" name="Proc. Natl. Acad. Sci. U.S.A.">
        <title>Structure of coronavirus hemagglutinin-esterase offers insight into corona and influenza virus evolution.</title>
        <authorList>
            <person name="Zeng Q."/>
            <person name="Langereis M.A."/>
            <person name="van Vliet A.L."/>
            <person name="Huizinga E.G."/>
            <person name="de Groot R.J."/>
        </authorList>
    </citation>
    <scope>X-RAY CRYSTALLOGRAPHY (1.8 ANGSTROMS) OF 19-388 OF APOPROTEIN AND MUTANT ALA-40 IN COMPLEX WITH RECEPTOR</scope>
    <scope>FUNCTION</scope>
    <scope>CATALYTIC ACTIVITY</scope>
    <scope>SUBUNIT</scope>
    <scope>ACTIVE SITES</scope>
    <scope>GLYCOSYLATION AT ASN-54; ASN-89; ASN-236; ASN-301; ASN-316 AND ASN-358</scope>
    <scope>DISULFIDE BONDS</scope>
    <scope>MUTAGENESIS OF SER-40; TYR-184; PHE-211; LEU-266 AND LEU-267</scope>
</reference>
<dbReference type="EC" id="3.1.1.53" evidence="1"/>
<dbReference type="EMBL" id="U00735">
    <property type="protein sequence ID" value="AAA66393.1"/>
    <property type="molecule type" value="Genomic_RNA"/>
</dbReference>
<dbReference type="EMBL" id="S50936">
    <property type="protein sequence ID" value="AAB19562.1"/>
    <property type="molecule type" value="Genomic_RNA"/>
</dbReference>
<dbReference type="PIR" id="A34666">
    <property type="entry name" value="HMIHBC"/>
</dbReference>
<dbReference type="PDB" id="3CL4">
    <property type="method" value="X-ray"/>
    <property type="resolution" value="2.10 A"/>
    <property type="chains" value="A=19-388"/>
</dbReference>
<dbReference type="PDB" id="3CL5">
    <property type="method" value="X-ray"/>
    <property type="resolution" value="1.80 A"/>
    <property type="chains" value="A=19-388"/>
</dbReference>
<dbReference type="PDBsum" id="3CL4"/>
<dbReference type="PDBsum" id="3CL5"/>
<dbReference type="SMR" id="P15776"/>
<dbReference type="UniLectin" id="P15776"/>
<dbReference type="GlyCosmos" id="P15776">
    <property type="glycosylation" value="8 sites, No reported glycans"/>
</dbReference>
<dbReference type="iPTMnet" id="P15776"/>
<dbReference type="BRENDA" id="3.1.1.53">
    <property type="organism ID" value="8724"/>
</dbReference>
<dbReference type="EvolutionaryTrace" id="P15776"/>
<dbReference type="Proteomes" id="UP000007554">
    <property type="component" value="Genome"/>
</dbReference>
<dbReference type="GO" id="GO:0020002">
    <property type="term" value="C:host cell plasma membrane"/>
    <property type="evidence" value="ECO:0007669"/>
    <property type="project" value="UniProtKB-SubCell"/>
</dbReference>
<dbReference type="GO" id="GO:0016020">
    <property type="term" value="C:membrane"/>
    <property type="evidence" value="ECO:0007669"/>
    <property type="project" value="UniProtKB-UniRule"/>
</dbReference>
<dbReference type="GO" id="GO:0019031">
    <property type="term" value="C:viral envelope"/>
    <property type="evidence" value="ECO:0007669"/>
    <property type="project" value="UniProtKB-UniRule"/>
</dbReference>
<dbReference type="GO" id="GO:0055036">
    <property type="term" value="C:virion membrane"/>
    <property type="evidence" value="ECO:0007669"/>
    <property type="project" value="UniProtKB-SubCell"/>
</dbReference>
<dbReference type="GO" id="GO:0046789">
    <property type="term" value="F:host cell surface receptor binding"/>
    <property type="evidence" value="ECO:0000314"/>
    <property type="project" value="UniProtKB"/>
</dbReference>
<dbReference type="GO" id="GO:0042802">
    <property type="term" value="F:identical protein binding"/>
    <property type="evidence" value="ECO:0000314"/>
    <property type="project" value="UniProtKB"/>
</dbReference>
<dbReference type="GO" id="GO:0042803">
    <property type="term" value="F:protein homodimerization activity"/>
    <property type="evidence" value="ECO:0000314"/>
    <property type="project" value="UniProtKB"/>
</dbReference>
<dbReference type="GO" id="GO:0106331">
    <property type="term" value="F:sialate 4-O-acetylesterase activity"/>
    <property type="evidence" value="ECO:0007669"/>
    <property type="project" value="RHEA"/>
</dbReference>
<dbReference type="GO" id="GO:0106330">
    <property type="term" value="F:sialate 9-O-acetylesterase activity"/>
    <property type="evidence" value="ECO:0007669"/>
    <property type="project" value="RHEA"/>
</dbReference>
<dbReference type="GO" id="GO:0001681">
    <property type="term" value="F:sialate O-acetylesterase activity"/>
    <property type="evidence" value="ECO:0000314"/>
    <property type="project" value="UniProtKB"/>
</dbReference>
<dbReference type="GO" id="GO:0005102">
    <property type="term" value="F:signaling receptor binding"/>
    <property type="evidence" value="ECO:0000314"/>
    <property type="project" value="UniProtKB"/>
</dbReference>
<dbReference type="GO" id="GO:0019064">
    <property type="term" value="P:fusion of virus membrane with host plasma membrane"/>
    <property type="evidence" value="ECO:0007669"/>
    <property type="project" value="UniProtKB-UniRule"/>
</dbReference>
<dbReference type="GO" id="GO:0002683">
    <property type="term" value="P:negative regulation of immune system process"/>
    <property type="evidence" value="ECO:0000314"/>
    <property type="project" value="UniProtKB"/>
</dbReference>
<dbReference type="GO" id="GO:0046813">
    <property type="term" value="P:receptor-mediated virion attachment to host cell"/>
    <property type="evidence" value="ECO:0000314"/>
    <property type="project" value="UniProtKB"/>
</dbReference>
<dbReference type="HAMAP" id="MF_04207">
    <property type="entry name" value="BETA_CORONA_HE"/>
    <property type="match status" value="1"/>
</dbReference>
<dbReference type="InterPro" id="IPR008980">
    <property type="entry name" value="Capsid_hemagglutn"/>
</dbReference>
<dbReference type="InterPro" id="IPR042545">
    <property type="entry name" value="HEMA"/>
</dbReference>
<dbReference type="InterPro" id="IPR007142">
    <property type="entry name" value="Hemagglutn-estrase_core"/>
</dbReference>
<dbReference type="InterPro" id="IPR003860">
    <property type="entry name" value="Hemagglutn-estrase_hemagglutn"/>
</dbReference>
<dbReference type="Pfam" id="PF03996">
    <property type="entry name" value="Hema_esterase"/>
    <property type="match status" value="1"/>
</dbReference>
<dbReference type="Pfam" id="PF02710">
    <property type="entry name" value="Hema_HEFG"/>
    <property type="match status" value="1"/>
</dbReference>
<dbReference type="SUPFAM" id="SSF52266">
    <property type="entry name" value="SGNH hydrolase"/>
    <property type="match status" value="1"/>
</dbReference>
<dbReference type="SUPFAM" id="SSF49818">
    <property type="entry name" value="Viral protein domain"/>
    <property type="match status" value="1"/>
</dbReference>
<proteinExistence type="evidence at protein level"/>
<evidence type="ECO:0000255" key="1">
    <source>
        <dbReference type="HAMAP-Rule" id="MF_04207"/>
    </source>
</evidence>
<evidence type="ECO:0000269" key="2">
    <source>
    </source>
</evidence>
<evidence type="ECO:0000269" key="3">
    <source>
    </source>
</evidence>
<evidence type="ECO:0000269" key="4">
    <source>
    </source>
</evidence>
<evidence type="ECO:0007829" key="5">
    <source>
        <dbReference type="PDB" id="3CL4"/>
    </source>
</evidence>
<evidence type="ECO:0007829" key="6">
    <source>
        <dbReference type="PDB" id="3CL5"/>
    </source>
</evidence>
<organismHost>
    <name type="scientific">Bos taurus</name>
    <name type="common">Bovine</name>
    <dbReference type="NCBI Taxonomy" id="9913"/>
</organismHost>
<comment type="function">
    <text evidence="1 2">Structural protein that makes short spikes at the surface of the virus. Contains receptor binding and receptor-destroying activities. Mediates de-O-acetylation of N-acetyl-4-O-acetylneuraminic acid, which is probably the receptor determinant recognized by the virus on the surface of erythrocytes and susceptible cells. This receptor-destroying activity is important for virus release as it probably helps preventing self-aggregation and ensures the efficient spread of the progeny virus from cell to cell. May serve as a secondary viral attachment protein for initiating infection, the spike protein being the major one. May become a target for both the humoral and the cellular branches of the immune system.</text>
</comment>
<comment type="catalytic activity">
    <reaction evidence="1 2">
        <text>N-acetyl-9-O-acetylneuraminate + H2O = N-acetylneuraminate + acetate + H(+)</text>
        <dbReference type="Rhea" id="RHEA:22600"/>
        <dbReference type="ChEBI" id="CHEBI:15377"/>
        <dbReference type="ChEBI" id="CHEBI:15378"/>
        <dbReference type="ChEBI" id="CHEBI:28999"/>
        <dbReference type="ChEBI" id="CHEBI:30089"/>
        <dbReference type="ChEBI" id="CHEBI:35418"/>
        <dbReference type="EC" id="3.1.1.53"/>
    </reaction>
</comment>
<comment type="catalytic activity">
    <reaction evidence="1 2">
        <text>N-acetyl-4-O-acetylneuraminate + H2O = N-acetylneuraminate + acetate + H(+)</text>
        <dbReference type="Rhea" id="RHEA:25564"/>
        <dbReference type="ChEBI" id="CHEBI:15377"/>
        <dbReference type="ChEBI" id="CHEBI:15378"/>
        <dbReference type="ChEBI" id="CHEBI:29006"/>
        <dbReference type="ChEBI" id="CHEBI:30089"/>
        <dbReference type="ChEBI" id="CHEBI:35418"/>
        <dbReference type="EC" id="3.1.1.53"/>
    </reaction>
</comment>
<comment type="subunit">
    <text evidence="1 2">Homodimer; disulfide-linked. Forms a complex with the M protein in the pre-Golgi. Associates then with S-M complex to form a ternary complex S-M-HE.</text>
</comment>
<comment type="subcellular location">
    <subcellularLocation>
        <location evidence="1">Virion membrane</location>
        <topology evidence="1">Single-pass type I membrane protein</topology>
    </subcellularLocation>
    <subcellularLocation>
        <location evidence="1">Host cell membrane</location>
        <topology evidence="1">Single-pass type I membrane protein</topology>
    </subcellularLocation>
    <text evidence="1 3">In infected cells becomes incorporated into the envelope of virions during virus assembly at the endoplasmic reticulum and cis Golgi. However, some may escape incorporation into virions and subsequently migrate to the cell surface.</text>
</comment>
<comment type="PTM">
    <text evidence="1 2">N-glycosylated in the host RER.</text>
</comment>
<comment type="similarity">
    <text evidence="1">Belongs to the influenza type C/coronaviruses hemagglutinin-esterase family.</text>
</comment>
<protein>
    <recommendedName>
        <fullName evidence="1">Hemagglutinin-esterase</fullName>
        <shortName evidence="1">HE protein</shortName>
        <ecNumber evidence="1">3.1.1.53</ecNumber>
    </recommendedName>
    <alternativeName>
        <fullName evidence="1">E3 glycoprotein</fullName>
    </alternativeName>
</protein>
<name>HEMA_CVBM</name>
<organism>
    <name type="scientific">Bovine coronavirus (strain Mebus)</name>
    <name type="common">BCoV</name>
    <name type="synonym">BCV</name>
    <dbReference type="NCBI Taxonomy" id="11132"/>
    <lineage>
        <taxon>Viruses</taxon>
        <taxon>Riboviria</taxon>
        <taxon>Orthornavirae</taxon>
        <taxon>Pisuviricota</taxon>
        <taxon>Pisoniviricetes</taxon>
        <taxon>Nidovirales</taxon>
        <taxon>Cornidovirineae</taxon>
        <taxon>Coronaviridae</taxon>
        <taxon>Orthocoronavirinae</taxon>
        <taxon>Betacoronavirus</taxon>
        <taxon>Embecovirus</taxon>
        <taxon>Betacoronavirus 1</taxon>
    </lineage>
</organism>
<accession>P15776</accession>
<sequence>MFLLLRFVLVSCIIGSLGFDNPPTNVVSHLNGDWFLFGDSRSDCNHVVNTNPRNYSYMDLNPALCDSGKISSKAGNSIFRSFHFTDFYNYTGEGQQIIFYEGVNFTPYHAFKCTTSGSNDIWMQNKGLFYTQVYKNMAVYRSLTFVNVPYVYNGSAQSTALCKSGSLVLNNPAYIAREANFGDYYYKVEADFYLSGCDEYIVPLCIFNGKFLSNTKYYDDSQYYFNKDTGVIYGLNSTETITTGFDFNCHYLVLPSGNYLAISNELLLTVPTKAICLNKRKDFTPVQVVDSRWNNARQSDNMTAVACQPPYCYFRNSTTNYVGVYDINHGDAGFTSILSGLLYDSPCFSQQGVFRYDNVSSVWPLYSYGRCPTAADINTPDVPICVYDPLPLILLGILLGVAVIIIVVLLLYFMVDNGTRLHDA</sequence>